<accession>Q6H711</accession>
<accession>Q0E3J6</accession>
<accession>Q84NC3</accession>
<sequence length="260" mass="28994">MGRGKIEIKRIENATNRQVTFSKRRGGLLKKANELAVLCDARVGVVIFSSTGKMFEYCSPTCSLRELIEHYQTVTNTHFEEINHDQQIFVEMTRMRNEMEKLDGGIRRFTGDDLSNLTLADINDLEQQLEFSVTKVRARKHQLLNQQLDNLRRKEHILEDQNSFLCRMINENHHQAAVGGGDVKAMVEMAPVLSMLTAAPAYYGEESSSTALQLTPPLHAVDAAAAAGFRLQPTQPNLQDPGCSSSSFHAAAAGHGLQLW</sequence>
<protein>
    <recommendedName>
        <fullName>MADS-box transcription factor 29</fullName>
    </recommendedName>
    <alternativeName>
        <fullName>OsMADS29</fullName>
    </alternativeName>
</protein>
<gene>
    <name type="primary">MADS29</name>
    <name type="ordered locus">Os02g0170300</name>
    <name type="ordered locus">LOC_Os02g07430</name>
    <name type="ORF">OJ1116_A06.26</name>
    <name evidence="5" type="ORF">OsJ_05554</name>
    <name type="ORF">P0030G02.16</name>
</gene>
<evidence type="ECO:0000255" key="1">
    <source>
        <dbReference type="PROSITE-ProRule" id="PRU00251"/>
    </source>
</evidence>
<evidence type="ECO:0000255" key="2">
    <source>
        <dbReference type="PROSITE-ProRule" id="PRU00629"/>
    </source>
</evidence>
<evidence type="ECO:0000269" key="3">
    <source>
    </source>
</evidence>
<evidence type="ECO:0000305" key="4"/>
<evidence type="ECO:0000312" key="5">
    <source>
        <dbReference type="EMBL" id="EEE56400.1"/>
    </source>
</evidence>
<reference key="1">
    <citation type="journal article" date="2005" name="Nature">
        <title>The map-based sequence of the rice genome.</title>
        <authorList>
            <consortium name="International rice genome sequencing project (IRGSP)"/>
        </authorList>
    </citation>
    <scope>NUCLEOTIDE SEQUENCE [LARGE SCALE GENOMIC DNA]</scope>
    <source>
        <strain>cv. Nipponbare</strain>
    </source>
</reference>
<reference key="2">
    <citation type="journal article" date="2008" name="Nucleic Acids Res.">
        <title>The rice annotation project database (RAP-DB): 2008 update.</title>
        <authorList>
            <consortium name="The rice annotation project (RAP)"/>
        </authorList>
    </citation>
    <scope>GENOME REANNOTATION</scope>
    <source>
        <strain>cv. Nipponbare</strain>
    </source>
</reference>
<reference key="3">
    <citation type="journal article" date="2013" name="Rice">
        <title>Improvement of the Oryza sativa Nipponbare reference genome using next generation sequence and optical map data.</title>
        <authorList>
            <person name="Kawahara Y."/>
            <person name="de la Bastide M."/>
            <person name="Hamilton J.P."/>
            <person name="Kanamori H."/>
            <person name="McCombie W.R."/>
            <person name="Ouyang S."/>
            <person name="Schwartz D.C."/>
            <person name="Tanaka T."/>
            <person name="Wu J."/>
            <person name="Zhou S."/>
            <person name="Childs K.L."/>
            <person name="Davidson R.M."/>
            <person name="Lin H."/>
            <person name="Quesada-Ocampo L."/>
            <person name="Vaillancourt B."/>
            <person name="Sakai H."/>
            <person name="Lee S.S."/>
            <person name="Kim J."/>
            <person name="Numa H."/>
            <person name="Itoh T."/>
            <person name="Buell C.R."/>
            <person name="Matsumoto T."/>
        </authorList>
    </citation>
    <scope>GENOME REANNOTATION</scope>
    <source>
        <strain>cv. Nipponbare</strain>
    </source>
</reference>
<reference key="4">
    <citation type="journal article" date="2005" name="PLoS Biol.">
        <title>The genomes of Oryza sativa: a history of duplications.</title>
        <authorList>
            <person name="Yu J."/>
            <person name="Wang J."/>
            <person name="Lin W."/>
            <person name="Li S."/>
            <person name="Li H."/>
            <person name="Zhou J."/>
            <person name="Ni P."/>
            <person name="Dong W."/>
            <person name="Hu S."/>
            <person name="Zeng C."/>
            <person name="Zhang J."/>
            <person name="Zhang Y."/>
            <person name="Li R."/>
            <person name="Xu Z."/>
            <person name="Li S."/>
            <person name="Li X."/>
            <person name="Zheng H."/>
            <person name="Cong L."/>
            <person name="Lin L."/>
            <person name="Yin J."/>
            <person name="Geng J."/>
            <person name="Li G."/>
            <person name="Shi J."/>
            <person name="Liu J."/>
            <person name="Lv H."/>
            <person name="Li J."/>
            <person name="Wang J."/>
            <person name="Deng Y."/>
            <person name="Ran L."/>
            <person name="Shi X."/>
            <person name="Wang X."/>
            <person name="Wu Q."/>
            <person name="Li C."/>
            <person name="Ren X."/>
            <person name="Wang J."/>
            <person name="Wang X."/>
            <person name="Li D."/>
            <person name="Liu D."/>
            <person name="Zhang X."/>
            <person name="Ji Z."/>
            <person name="Zhao W."/>
            <person name="Sun Y."/>
            <person name="Zhang Z."/>
            <person name="Bao J."/>
            <person name="Han Y."/>
            <person name="Dong L."/>
            <person name="Ji J."/>
            <person name="Chen P."/>
            <person name="Wu S."/>
            <person name="Liu J."/>
            <person name="Xiao Y."/>
            <person name="Bu D."/>
            <person name="Tan J."/>
            <person name="Yang L."/>
            <person name="Ye C."/>
            <person name="Zhang J."/>
            <person name="Xu J."/>
            <person name="Zhou Y."/>
            <person name="Yu Y."/>
            <person name="Zhang B."/>
            <person name="Zhuang S."/>
            <person name="Wei H."/>
            <person name="Liu B."/>
            <person name="Lei M."/>
            <person name="Yu H."/>
            <person name="Li Y."/>
            <person name="Xu H."/>
            <person name="Wei S."/>
            <person name="He X."/>
            <person name="Fang L."/>
            <person name="Zhang Z."/>
            <person name="Zhang Y."/>
            <person name="Huang X."/>
            <person name="Su Z."/>
            <person name="Tong W."/>
            <person name="Li J."/>
            <person name="Tong Z."/>
            <person name="Li S."/>
            <person name="Ye J."/>
            <person name="Wang L."/>
            <person name="Fang L."/>
            <person name="Lei T."/>
            <person name="Chen C.-S."/>
            <person name="Chen H.-C."/>
            <person name="Xu Z."/>
            <person name="Li H."/>
            <person name="Huang H."/>
            <person name="Zhang F."/>
            <person name="Xu H."/>
            <person name="Li N."/>
            <person name="Zhao C."/>
            <person name="Li S."/>
            <person name="Dong L."/>
            <person name="Huang Y."/>
            <person name="Li L."/>
            <person name="Xi Y."/>
            <person name="Qi Q."/>
            <person name="Li W."/>
            <person name="Zhang B."/>
            <person name="Hu W."/>
            <person name="Zhang Y."/>
            <person name="Tian X."/>
            <person name="Jiao Y."/>
            <person name="Liang X."/>
            <person name="Jin J."/>
            <person name="Gao L."/>
            <person name="Zheng W."/>
            <person name="Hao B."/>
            <person name="Liu S.-M."/>
            <person name="Wang W."/>
            <person name="Yuan L."/>
            <person name="Cao M."/>
            <person name="McDermott J."/>
            <person name="Samudrala R."/>
            <person name="Wang J."/>
            <person name="Wong G.K.-S."/>
            <person name="Yang H."/>
        </authorList>
    </citation>
    <scope>NUCLEOTIDE SEQUENCE [LARGE SCALE GENOMIC DNA]</scope>
    <source>
        <strain>cv. Nipponbare</strain>
    </source>
</reference>
<reference key="5">
    <citation type="journal article" date="2003" name="Science">
        <title>Collection, mapping, and annotation of over 28,000 cDNA clones from japonica rice.</title>
        <authorList>
            <consortium name="The rice full-length cDNA consortium"/>
        </authorList>
    </citation>
    <scope>NUCLEOTIDE SEQUENCE [LARGE SCALE MRNA]</scope>
    <source>
        <strain>cv. Nipponbare</strain>
    </source>
</reference>
<reference key="6">
    <citation type="journal article" date="2003" name="Plant Cell Physiol.">
        <title>Systematic reverse genetic screening of T-DNA tagged genes in rice for functional genomic analyses: MADS-box genes as a test case.</title>
        <authorList>
            <person name="Lee S."/>
            <person name="Kim J."/>
            <person name="Son J.-S."/>
            <person name="Nam J."/>
            <person name="Jeong D.-H."/>
            <person name="Lee K."/>
            <person name="Jang S."/>
            <person name="Yoo J."/>
            <person name="Lee J."/>
            <person name="Lee D.-Y."/>
            <person name="Kang H.-G."/>
            <person name="An G."/>
        </authorList>
    </citation>
    <scope>NUCLEOTIDE SEQUENCE [MRNA] OF 10-65</scope>
    <scope>TISSUE SPECIFICITY</scope>
    <source>
        <strain>cv. Dongjin</strain>
    </source>
</reference>
<feature type="chain" id="PRO_0000229909" description="MADS-box transcription factor 29">
    <location>
        <begin position="1"/>
        <end position="260"/>
    </location>
</feature>
<feature type="domain" description="MADS-box" evidence="1">
    <location>
        <begin position="1"/>
        <end position="61"/>
    </location>
</feature>
<feature type="domain" description="K-box" evidence="2">
    <location>
        <begin position="85"/>
        <end position="175"/>
    </location>
</feature>
<dbReference type="EMBL" id="AP004113">
    <property type="protein sequence ID" value="BAD25186.1"/>
    <property type="molecule type" value="Genomic_DNA"/>
</dbReference>
<dbReference type="EMBL" id="AP004836">
    <property type="protein sequence ID" value="BAD25488.1"/>
    <property type="molecule type" value="Genomic_DNA"/>
</dbReference>
<dbReference type="EMBL" id="AP008208">
    <property type="protein sequence ID" value="BAF07942.1"/>
    <property type="molecule type" value="Genomic_DNA"/>
</dbReference>
<dbReference type="EMBL" id="AP014958">
    <property type="protein sequence ID" value="BAS77197.1"/>
    <property type="molecule type" value="Genomic_DNA"/>
</dbReference>
<dbReference type="EMBL" id="CM000139">
    <property type="protein sequence ID" value="EEE56400.1"/>
    <property type="molecule type" value="Genomic_DNA"/>
</dbReference>
<dbReference type="EMBL" id="AK109522">
    <property type="protein sequence ID" value="BAG98787.1"/>
    <property type="molecule type" value="mRNA"/>
</dbReference>
<dbReference type="EMBL" id="AY177697">
    <property type="protein sequence ID" value="AAO47707.1"/>
    <property type="molecule type" value="mRNA"/>
</dbReference>
<dbReference type="RefSeq" id="XP_015624837.1">
    <property type="nucleotide sequence ID" value="XM_015769351.1"/>
</dbReference>
<dbReference type="SMR" id="Q6H711"/>
<dbReference type="FunCoup" id="Q6H711">
    <property type="interactions" value="38"/>
</dbReference>
<dbReference type="STRING" id="39947.Q6H711"/>
<dbReference type="PaxDb" id="39947-Q6H711"/>
<dbReference type="EnsemblPlants" id="Os02t0170300-01">
    <property type="protein sequence ID" value="Os02t0170300-01"/>
    <property type="gene ID" value="Os02g0170300"/>
</dbReference>
<dbReference type="Gramene" id="Os02t0170300-01">
    <property type="protein sequence ID" value="Os02t0170300-01"/>
    <property type="gene ID" value="Os02g0170300"/>
</dbReference>
<dbReference type="KEGG" id="dosa:Os02g0170300"/>
<dbReference type="eggNOG" id="KOG0014">
    <property type="taxonomic scope" value="Eukaryota"/>
</dbReference>
<dbReference type="HOGENOM" id="CLU_053053_0_1_1"/>
<dbReference type="InParanoid" id="Q6H711"/>
<dbReference type="OMA" id="FTHSTYY"/>
<dbReference type="OrthoDB" id="1898716at2759"/>
<dbReference type="PlantReactome" id="R-OSA-9623513">
    <property type="pathway name" value="Maternal tissue PCD"/>
</dbReference>
<dbReference type="Proteomes" id="UP000000763">
    <property type="component" value="Chromosome 2"/>
</dbReference>
<dbReference type="Proteomes" id="UP000007752">
    <property type="component" value="Chromosome 2"/>
</dbReference>
<dbReference type="Proteomes" id="UP000059680">
    <property type="component" value="Chromosome 2"/>
</dbReference>
<dbReference type="GO" id="GO:0005634">
    <property type="term" value="C:nucleus"/>
    <property type="evidence" value="ECO:0000314"/>
    <property type="project" value="CACAO"/>
</dbReference>
<dbReference type="GO" id="GO:0000981">
    <property type="term" value="F:DNA-binding transcription factor activity, RNA polymerase II-specific"/>
    <property type="evidence" value="ECO:0000318"/>
    <property type="project" value="GO_Central"/>
</dbReference>
<dbReference type="GO" id="GO:0046983">
    <property type="term" value="F:protein dimerization activity"/>
    <property type="evidence" value="ECO:0007669"/>
    <property type="project" value="InterPro"/>
</dbReference>
<dbReference type="GO" id="GO:0000978">
    <property type="term" value="F:RNA polymerase II cis-regulatory region sequence-specific DNA binding"/>
    <property type="evidence" value="ECO:0000318"/>
    <property type="project" value="GO_Central"/>
</dbReference>
<dbReference type="GO" id="GO:0043068">
    <property type="term" value="P:positive regulation of programmed cell death"/>
    <property type="evidence" value="ECO:0000315"/>
    <property type="project" value="CACAO"/>
</dbReference>
<dbReference type="GO" id="GO:0045944">
    <property type="term" value="P:positive regulation of transcription by RNA polymerase II"/>
    <property type="evidence" value="ECO:0007669"/>
    <property type="project" value="InterPro"/>
</dbReference>
<dbReference type="GO" id="GO:0006357">
    <property type="term" value="P:regulation of transcription by RNA polymerase II"/>
    <property type="evidence" value="ECO:0000318"/>
    <property type="project" value="GO_Central"/>
</dbReference>
<dbReference type="GO" id="GO:0048316">
    <property type="term" value="P:seed development"/>
    <property type="evidence" value="ECO:0000315"/>
    <property type="project" value="CACAO"/>
</dbReference>
<dbReference type="GO" id="GO:0019252">
    <property type="term" value="P:starch biosynthetic process"/>
    <property type="evidence" value="ECO:0000315"/>
    <property type="project" value="CACAO"/>
</dbReference>
<dbReference type="CDD" id="cd00265">
    <property type="entry name" value="MADS_MEF2_like"/>
    <property type="match status" value="1"/>
</dbReference>
<dbReference type="FunFam" id="3.40.1810.10:FF:000026">
    <property type="entry name" value="MADS-box transcription factor 29"/>
    <property type="match status" value="1"/>
</dbReference>
<dbReference type="Gene3D" id="3.40.1810.10">
    <property type="entry name" value="Transcription factor, MADS-box"/>
    <property type="match status" value="1"/>
</dbReference>
<dbReference type="InterPro" id="IPR050142">
    <property type="entry name" value="MADS-box/MEF2_TF"/>
</dbReference>
<dbReference type="InterPro" id="IPR033896">
    <property type="entry name" value="MEF2-like_N"/>
</dbReference>
<dbReference type="InterPro" id="IPR002487">
    <property type="entry name" value="TF_Kbox"/>
</dbReference>
<dbReference type="InterPro" id="IPR002100">
    <property type="entry name" value="TF_MADSbox"/>
</dbReference>
<dbReference type="InterPro" id="IPR036879">
    <property type="entry name" value="TF_MADSbox_sf"/>
</dbReference>
<dbReference type="PANTHER" id="PTHR48019">
    <property type="entry name" value="SERUM RESPONSE FACTOR HOMOLOG"/>
    <property type="match status" value="1"/>
</dbReference>
<dbReference type="Pfam" id="PF01486">
    <property type="entry name" value="K-box"/>
    <property type="match status" value="1"/>
</dbReference>
<dbReference type="Pfam" id="PF00319">
    <property type="entry name" value="SRF-TF"/>
    <property type="match status" value="1"/>
</dbReference>
<dbReference type="PRINTS" id="PR00404">
    <property type="entry name" value="MADSDOMAIN"/>
</dbReference>
<dbReference type="SMART" id="SM00432">
    <property type="entry name" value="MADS"/>
    <property type="match status" value="1"/>
</dbReference>
<dbReference type="SUPFAM" id="SSF55455">
    <property type="entry name" value="SRF-like"/>
    <property type="match status" value="1"/>
</dbReference>
<dbReference type="PROSITE" id="PS51297">
    <property type="entry name" value="K_BOX"/>
    <property type="match status" value="1"/>
</dbReference>
<dbReference type="PROSITE" id="PS00350">
    <property type="entry name" value="MADS_BOX_1"/>
    <property type="match status" value="1"/>
</dbReference>
<dbReference type="PROSITE" id="PS50066">
    <property type="entry name" value="MADS_BOX_2"/>
    <property type="match status" value="1"/>
</dbReference>
<name>MAD29_ORYSJ</name>
<keyword id="KW-0238">DNA-binding</keyword>
<keyword id="KW-0539">Nucleus</keyword>
<keyword id="KW-1185">Reference proteome</keyword>
<keyword id="KW-0804">Transcription</keyword>
<keyword id="KW-0805">Transcription regulation</keyword>
<proteinExistence type="evidence at transcript level"/>
<organism>
    <name type="scientific">Oryza sativa subsp. japonica</name>
    <name type="common">Rice</name>
    <dbReference type="NCBI Taxonomy" id="39947"/>
    <lineage>
        <taxon>Eukaryota</taxon>
        <taxon>Viridiplantae</taxon>
        <taxon>Streptophyta</taxon>
        <taxon>Embryophyta</taxon>
        <taxon>Tracheophyta</taxon>
        <taxon>Spermatophyta</taxon>
        <taxon>Magnoliopsida</taxon>
        <taxon>Liliopsida</taxon>
        <taxon>Poales</taxon>
        <taxon>Poaceae</taxon>
        <taxon>BOP clade</taxon>
        <taxon>Oryzoideae</taxon>
        <taxon>Oryzeae</taxon>
        <taxon>Oryzinae</taxon>
        <taxon>Oryza</taxon>
        <taxon>Oryza sativa</taxon>
    </lineage>
</organism>
<comment type="function">
    <text>Probable transcription factor.</text>
</comment>
<comment type="subcellular location">
    <subcellularLocation>
        <location evidence="4">Nucleus</location>
    </subcellularLocation>
</comment>
<comment type="tissue specificity">
    <text evidence="3">Expressed in developing seeds.</text>
</comment>